<organism>
    <name type="scientific">Homo sapiens</name>
    <name type="common">Human</name>
    <dbReference type="NCBI Taxonomy" id="9606"/>
    <lineage>
        <taxon>Eukaryota</taxon>
        <taxon>Metazoa</taxon>
        <taxon>Chordata</taxon>
        <taxon>Craniata</taxon>
        <taxon>Vertebrata</taxon>
        <taxon>Euteleostomi</taxon>
        <taxon>Mammalia</taxon>
        <taxon>Eutheria</taxon>
        <taxon>Euarchontoglires</taxon>
        <taxon>Primates</taxon>
        <taxon>Haplorrhini</taxon>
        <taxon>Catarrhini</taxon>
        <taxon>Hominidae</taxon>
        <taxon>Homo</taxon>
    </lineage>
</organism>
<accession>Q9H116</accession>
<accession>A8K199</accession>
<accession>B2RBC3</accession>
<accession>B3KPL4</accession>
<accession>B4DF58</accession>
<accession>D3DW39</accession>
<accession>Q54A22</accession>
<accession>Q96N08</accession>
<accession>Q9BQK9</accession>
<accession>Q9H117</accession>
<accession>Q9H6W6</accession>
<feature type="chain" id="PRO_0000047539" description="GDNF-inducible zinc finger protein 1">
    <location>
        <begin position="1"/>
        <end position="711"/>
    </location>
</feature>
<feature type="domain" description="BTB" evidence="2">
    <location>
        <begin position="31"/>
        <end position="103"/>
    </location>
</feature>
<feature type="zinc finger region" description="C2H2-type 1" evidence="3">
    <location>
        <begin position="317"/>
        <end position="340"/>
    </location>
</feature>
<feature type="zinc finger region" description="C2H2-type 2" evidence="3">
    <location>
        <begin position="348"/>
        <end position="371"/>
    </location>
</feature>
<feature type="zinc finger region" description="C2H2-type 3" evidence="3">
    <location>
        <begin position="377"/>
        <end position="400"/>
    </location>
</feature>
<feature type="zinc finger region" description="C2H2-type 4" evidence="3">
    <location>
        <begin position="407"/>
        <end position="429"/>
    </location>
</feature>
<feature type="zinc finger region" description="C2H2-type 5" evidence="3">
    <location>
        <begin position="435"/>
        <end position="457"/>
    </location>
</feature>
<feature type="zinc finger region" description="C2H2-type 6" evidence="3">
    <location>
        <begin position="463"/>
        <end position="485"/>
    </location>
</feature>
<feature type="zinc finger region" description="C2H2-type 7" evidence="3">
    <location>
        <begin position="491"/>
        <end position="513"/>
    </location>
</feature>
<feature type="zinc finger region" description="C2H2-type 8" evidence="3">
    <location>
        <begin position="519"/>
        <end position="541"/>
    </location>
</feature>
<feature type="zinc finger region" description="C2H2-type 9" evidence="3">
    <location>
        <begin position="547"/>
        <end position="569"/>
    </location>
</feature>
<feature type="zinc finger region" description="C2H2-type 10" evidence="3">
    <location>
        <begin position="575"/>
        <end position="597"/>
    </location>
</feature>
<feature type="region of interest" description="Disordered" evidence="4">
    <location>
        <begin position="153"/>
        <end position="220"/>
    </location>
</feature>
<feature type="region of interest" description="Disordered" evidence="4">
    <location>
        <begin position="243"/>
        <end position="312"/>
    </location>
</feature>
<feature type="compositionally biased region" description="Low complexity" evidence="4">
    <location>
        <begin position="153"/>
        <end position="168"/>
    </location>
</feature>
<feature type="compositionally biased region" description="Basic and acidic residues" evidence="4">
    <location>
        <begin position="197"/>
        <end position="212"/>
    </location>
</feature>
<feature type="compositionally biased region" description="Basic and acidic residues" evidence="4">
    <location>
        <begin position="243"/>
        <end position="252"/>
    </location>
</feature>
<feature type="compositionally biased region" description="Basic and acidic residues" evidence="4">
    <location>
        <begin position="265"/>
        <end position="277"/>
    </location>
</feature>
<feature type="compositionally biased region" description="Acidic residues" evidence="4">
    <location>
        <begin position="298"/>
        <end position="309"/>
    </location>
</feature>
<feature type="modified residue" description="Phosphoserine" evidence="1">
    <location>
        <position position="613"/>
    </location>
</feature>
<feature type="splice variant" id="VSP_055933" description="In isoform 2." evidence="11">
    <location>
        <begin position="1"/>
        <end position="491"/>
    </location>
</feature>
<feature type="sequence variant" id="VAR_064718" description="Found in a renal cell carcinoma sample; somatic mutation." evidence="9">
    <original>A</original>
    <variation>V</variation>
    <location>
        <position position="97"/>
    </location>
</feature>
<feature type="sequence variant" id="VAR_052735" description="In dbSNP:rs3810574.">
    <original>N</original>
    <variation>S</variation>
    <location>
        <position position="190"/>
    </location>
</feature>
<feature type="sequence variant" id="VAR_059890" description="In dbSNP:rs6048760.">
    <original>Q</original>
    <variation>L</variation>
    <location>
        <position position="275"/>
    </location>
</feature>
<feature type="sequence variant" id="VAR_024212" description="In dbSNP:rs6048760." evidence="6">
    <original>Q</original>
    <variation>P</variation>
    <location>
        <position position="275"/>
    </location>
</feature>
<feature type="sequence variant" id="VAR_059891" description="In dbSNP:rs6048760.">
    <original>Q</original>
    <variation>R</variation>
    <location>
        <position position="275"/>
    </location>
</feature>
<feature type="sequence variant" id="VAR_080250" description="In JLSM." evidence="10">
    <location>
        <begin position="289"/>
        <end position="711"/>
    </location>
</feature>
<feature type="sequence variant" id="VAR_052736" description="In dbSNP:rs6114068.">
    <original>K</original>
    <variation>N</variation>
    <location>
        <position position="318"/>
    </location>
</feature>
<feature type="sequence variant" id="VAR_052737" description="In dbSNP:rs6048766.">
    <original>D</original>
    <variation>N</variation>
    <location>
        <position position="667"/>
    </location>
</feature>
<feature type="mutagenesis site" description="Decreased repression activity." evidence="5">
    <original>D</original>
    <variation>N</variation>
    <location>
        <position position="32"/>
    </location>
</feature>
<feature type="mutagenesis site" description="Decreased repression activity." evidence="5">
    <original>K</original>
    <variation>D</variation>
    <location>
        <position position="50"/>
    </location>
</feature>
<feature type="sequence conflict" description="In Ref. 2; BAG51726." evidence="12" ref="2">
    <original>K</original>
    <variation>R</variation>
    <location>
        <position position="520"/>
    </location>
</feature>
<feature type="sequence conflict" description="In Ref. 2; BAG51726." evidence="12" ref="2">
    <original>E</original>
    <variation>G</variation>
    <location>
        <position position="628"/>
    </location>
</feature>
<feature type="sequence conflict" description="In Ref. 2; BAB15134." evidence="12" ref="2">
    <original>S</original>
    <variation>P</variation>
    <location>
        <position position="632"/>
    </location>
</feature>
<feature type="sequence conflict" description="In Ref. 2; BAG51726." evidence="12" ref="2">
    <original>T</original>
    <variation>A</variation>
    <location>
        <position position="694"/>
    </location>
</feature>
<gene>
    <name evidence="13" type="primary">GZF1</name>
    <name type="synonym">ZBTB23</name>
    <name type="synonym">ZNF336</name>
</gene>
<reference key="1">
    <citation type="journal article" date="2003" name="J. Biol. Chem.">
        <title>Identification of a novel glial cell line-derived neurotrophic factor-inducible gene required for renal branching morphogenesis.</title>
        <authorList>
            <person name="Fukuda N."/>
            <person name="Ichihara M."/>
            <person name="Morinaga T."/>
            <person name="Kawai K."/>
            <person name="Hayashi H."/>
            <person name="Murakumo Y."/>
            <person name="Matsuo S."/>
            <person name="Takahashi M."/>
        </authorList>
    </citation>
    <scope>NUCLEOTIDE SEQUENCE [MRNA] (ISOFORM 1)</scope>
    <scope>FUNCTION</scope>
    <scope>SUBCELLULAR LOCATION</scope>
    <scope>TISSUE SPECIFICITY</scope>
    <scope>INDUCTION</scope>
    <scope>MUTAGENESIS OF ASP-32 AND LYS-50</scope>
    <source>
        <tissue>Neuroblastoma</tissue>
    </source>
</reference>
<reference key="2">
    <citation type="journal article" date="2004" name="Nat. Genet.">
        <title>Complete sequencing and characterization of 21,243 full-length human cDNAs.</title>
        <authorList>
            <person name="Ota T."/>
            <person name="Suzuki Y."/>
            <person name="Nishikawa T."/>
            <person name="Otsuki T."/>
            <person name="Sugiyama T."/>
            <person name="Irie R."/>
            <person name="Wakamatsu A."/>
            <person name="Hayashi K."/>
            <person name="Sato H."/>
            <person name="Nagai K."/>
            <person name="Kimura K."/>
            <person name="Makita H."/>
            <person name="Sekine M."/>
            <person name="Obayashi M."/>
            <person name="Nishi T."/>
            <person name="Shibahara T."/>
            <person name="Tanaka T."/>
            <person name="Ishii S."/>
            <person name="Yamamoto J."/>
            <person name="Saito K."/>
            <person name="Kawai Y."/>
            <person name="Isono Y."/>
            <person name="Nakamura Y."/>
            <person name="Nagahari K."/>
            <person name="Murakami K."/>
            <person name="Yasuda T."/>
            <person name="Iwayanagi T."/>
            <person name="Wagatsuma M."/>
            <person name="Shiratori A."/>
            <person name="Sudo H."/>
            <person name="Hosoiri T."/>
            <person name="Kaku Y."/>
            <person name="Kodaira H."/>
            <person name="Kondo H."/>
            <person name="Sugawara M."/>
            <person name="Takahashi M."/>
            <person name="Kanda K."/>
            <person name="Yokoi T."/>
            <person name="Furuya T."/>
            <person name="Kikkawa E."/>
            <person name="Omura Y."/>
            <person name="Abe K."/>
            <person name="Kamihara K."/>
            <person name="Katsuta N."/>
            <person name="Sato K."/>
            <person name="Tanikawa M."/>
            <person name="Yamazaki M."/>
            <person name="Ninomiya K."/>
            <person name="Ishibashi T."/>
            <person name="Yamashita H."/>
            <person name="Murakawa K."/>
            <person name="Fujimori K."/>
            <person name="Tanai H."/>
            <person name="Kimata M."/>
            <person name="Watanabe M."/>
            <person name="Hiraoka S."/>
            <person name="Chiba Y."/>
            <person name="Ishida S."/>
            <person name="Ono Y."/>
            <person name="Takiguchi S."/>
            <person name="Watanabe S."/>
            <person name="Yosida M."/>
            <person name="Hotuta T."/>
            <person name="Kusano J."/>
            <person name="Kanehori K."/>
            <person name="Takahashi-Fujii A."/>
            <person name="Hara H."/>
            <person name="Tanase T.-O."/>
            <person name="Nomura Y."/>
            <person name="Togiya S."/>
            <person name="Komai F."/>
            <person name="Hara R."/>
            <person name="Takeuchi K."/>
            <person name="Arita M."/>
            <person name="Imose N."/>
            <person name="Musashino K."/>
            <person name="Yuuki H."/>
            <person name="Oshima A."/>
            <person name="Sasaki N."/>
            <person name="Aotsuka S."/>
            <person name="Yoshikawa Y."/>
            <person name="Matsunawa H."/>
            <person name="Ichihara T."/>
            <person name="Shiohata N."/>
            <person name="Sano S."/>
            <person name="Moriya S."/>
            <person name="Momiyama H."/>
            <person name="Satoh N."/>
            <person name="Takami S."/>
            <person name="Terashima Y."/>
            <person name="Suzuki O."/>
            <person name="Nakagawa S."/>
            <person name="Senoh A."/>
            <person name="Mizoguchi H."/>
            <person name="Goto Y."/>
            <person name="Shimizu F."/>
            <person name="Wakebe H."/>
            <person name="Hishigaki H."/>
            <person name="Watanabe T."/>
            <person name="Sugiyama A."/>
            <person name="Takemoto M."/>
            <person name="Kawakami B."/>
            <person name="Yamazaki M."/>
            <person name="Watanabe K."/>
            <person name="Kumagai A."/>
            <person name="Itakura S."/>
            <person name="Fukuzumi Y."/>
            <person name="Fujimori Y."/>
            <person name="Komiyama M."/>
            <person name="Tashiro H."/>
            <person name="Tanigami A."/>
            <person name="Fujiwara T."/>
            <person name="Ono T."/>
            <person name="Yamada K."/>
            <person name="Fujii Y."/>
            <person name="Ozaki K."/>
            <person name="Hirao M."/>
            <person name="Ohmori Y."/>
            <person name="Kawabata A."/>
            <person name="Hikiji T."/>
            <person name="Kobatake N."/>
            <person name="Inagaki H."/>
            <person name="Ikema Y."/>
            <person name="Okamoto S."/>
            <person name="Okitani R."/>
            <person name="Kawakami T."/>
            <person name="Noguchi S."/>
            <person name="Itoh T."/>
            <person name="Shigeta K."/>
            <person name="Senba T."/>
            <person name="Matsumura K."/>
            <person name="Nakajima Y."/>
            <person name="Mizuno T."/>
            <person name="Morinaga M."/>
            <person name="Sasaki M."/>
            <person name="Togashi T."/>
            <person name="Oyama M."/>
            <person name="Hata H."/>
            <person name="Watanabe M."/>
            <person name="Komatsu T."/>
            <person name="Mizushima-Sugano J."/>
            <person name="Satoh T."/>
            <person name="Shirai Y."/>
            <person name="Takahashi Y."/>
            <person name="Nakagawa K."/>
            <person name="Okumura K."/>
            <person name="Nagase T."/>
            <person name="Nomura N."/>
            <person name="Kikuchi H."/>
            <person name="Masuho Y."/>
            <person name="Yamashita R."/>
            <person name="Nakai K."/>
            <person name="Yada T."/>
            <person name="Nakamura Y."/>
            <person name="Ohara O."/>
            <person name="Isogai T."/>
            <person name="Sugano S."/>
        </authorList>
    </citation>
    <scope>NUCLEOTIDE SEQUENCE [LARGE SCALE MRNA] (ISOFORMS 1 AND 2)</scope>
    <scope>VARIANT PRO-275</scope>
    <source>
        <tissue>Brain</tissue>
        <tissue>Cerebellum</tissue>
        <tissue>Hepatoma</tissue>
        <tissue>Teratocarcinoma</tissue>
        <tissue>Trachea</tissue>
    </source>
</reference>
<reference key="3">
    <citation type="journal article" date="2001" name="Nature">
        <title>The DNA sequence and comparative analysis of human chromosome 20.</title>
        <authorList>
            <person name="Deloukas P."/>
            <person name="Matthews L.H."/>
            <person name="Ashurst J.L."/>
            <person name="Burton J."/>
            <person name="Gilbert J.G.R."/>
            <person name="Jones M."/>
            <person name="Stavrides G."/>
            <person name="Almeida J.P."/>
            <person name="Babbage A.K."/>
            <person name="Bagguley C.L."/>
            <person name="Bailey J."/>
            <person name="Barlow K.F."/>
            <person name="Bates K.N."/>
            <person name="Beard L.M."/>
            <person name="Beare D.M."/>
            <person name="Beasley O.P."/>
            <person name="Bird C.P."/>
            <person name="Blakey S.E."/>
            <person name="Bridgeman A.M."/>
            <person name="Brown A.J."/>
            <person name="Buck D."/>
            <person name="Burrill W.D."/>
            <person name="Butler A.P."/>
            <person name="Carder C."/>
            <person name="Carter N.P."/>
            <person name="Chapman J.C."/>
            <person name="Clamp M."/>
            <person name="Clark G."/>
            <person name="Clark L.N."/>
            <person name="Clark S.Y."/>
            <person name="Clee C.M."/>
            <person name="Clegg S."/>
            <person name="Cobley V.E."/>
            <person name="Collier R.E."/>
            <person name="Connor R.E."/>
            <person name="Corby N.R."/>
            <person name="Coulson A."/>
            <person name="Coville G.J."/>
            <person name="Deadman R."/>
            <person name="Dhami P.D."/>
            <person name="Dunn M."/>
            <person name="Ellington A.G."/>
            <person name="Frankland J.A."/>
            <person name="Fraser A."/>
            <person name="French L."/>
            <person name="Garner P."/>
            <person name="Grafham D.V."/>
            <person name="Griffiths C."/>
            <person name="Griffiths M.N.D."/>
            <person name="Gwilliam R."/>
            <person name="Hall R.E."/>
            <person name="Hammond S."/>
            <person name="Harley J.L."/>
            <person name="Heath P.D."/>
            <person name="Ho S."/>
            <person name="Holden J.L."/>
            <person name="Howden P.J."/>
            <person name="Huckle E."/>
            <person name="Hunt A.R."/>
            <person name="Hunt S.E."/>
            <person name="Jekosch K."/>
            <person name="Johnson C.M."/>
            <person name="Johnson D."/>
            <person name="Kay M.P."/>
            <person name="Kimberley A.M."/>
            <person name="King A."/>
            <person name="Knights A."/>
            <person name="Laird G.K."/>
            <person name="Lawlor S."/>
            <person name="Lehvaeslaiho M.H."/>
            <person name="Leversha M.A."/>
            <person name="Lloyd C."/>
            <person name="Lloyd D.M."/>
            <person name="Lovell J.D."/>
            <person name="Marsh V.L."/>
            <person name="Martin S.L."/>
            <person name="McConnachie L.J."/>
            <person name="McLay K."/>
            <person name="McMurray A.A."/>
            <person name="Milne S.A."/>
            <person name="Mistry D."/>
            <person name="Moore M.J.F."/>
            <person name="Mullikin J.C."/>
            <person name="Nickerson T."/>
            <person name="Oliver K."/>
            <person name="Parker A."/>
            <person name="Patel R."/>
            <person name="Pearce T.A.V."/>
            <person name="Peck A.I."/>
            <person name="Phillimore B.J.C.T."/>
            <person name="Prathalingam S.R."/>
            <person name="Plumb R.W."/>
            <person name="Ramsay H."/>
            <person name="Rice C.M."/>
            <person name="Ross M.T."/>
            <person name="Scott C.E."/>
            <person name="Sehra H.K."/>
            <person name="Shownkeen R."/>
            <person name="Sims S."/>
            <person name="Skuce C.D."/>
            <person name="Smith M.L."/>
            <person name="Soderlund C."/>
            <person name="Steward C.A."/>
            <person name="Sulston J.E."/>
            <person name="Swann R.M."/>
            <person name="Sycamore N."/>
            <person name="Taylor R."/>
            <person name="Tee L."/>
            <person name="Thomas D.W."/>
            <person name="Thorpe A."/>
            <person name="Tracey A."/>
            <person name="Tromans A.C."/>
            <person name="Vaudin M."/>
            <person name="Wall M."/>
            <person name="Wallis J.M."/>
            <person name="Whitehead S.L."/>
            <person name="Whittaker P."/>
            <person name="Willey D.L."/>
            <person name="Williams L."/>
            <person name="Williams S.A."/>
            <person name="Wilming L."/>
            <person name="Wray P.W."/>
            <person name="Hubbard T."/>
            <person name="Durbin R.M."/>
            <person name="Bentley D.R."/>
            <person name="Beck S."/>
            <person name="Rogers J."/>
        </authorList>
    </citation>
    <scope>NUCLEOTIDE SEQUENCE [LARGE SCALE GENOMIC DNA]</scope>
</reference>
<reference key="4">
    <citation type="submission" date="2005-09" db="EMBL/GenBank/DDBJ databases">
        <authorList>
            <person name="Mural R.J."/>
            <person name="Istrail S."/>
            <person name="Sutton G.G."/>
            <person name="Florea L."/>
            <person name="Halpern A.L."/>
            <person name="Mobarry C.M."/>
            <person name="Lippert R."/>
            <person name="Walenz B."/>
            <person name="Shatkay H."/>
            <person name="Dew I."/>
            <person name="Miller J.R."/>
            <person name="Flanigan M.J."/>
            <person name="Edwards N.J."/>
            <person name="Bolanos R."/>
            <person name="Fasulo D."/>
            <person name="Halldorsson B.V."/>
            <person name="Hannenhalli S."/>
            <person name="Turner R."/>
            <person name="Yooseph S."/>
            <person name="Lu F."/>
            <person name="Nusskern D.R."/>
            <person name="Shue B.C."/>
            <person name="Zheng X.H."/>
            <person name="Zhong F."/>
            <person name="Delcher A.L."/>
            <person name="Huson D.H."/>
            <person name="Kravitz S.A."/>
            <person name="Mouchard L."/>
            <person name="Reinert K."/>
            <person name="Remington K.A."/>
            <person name="Clark A.G."/>
            <person name="Waterman M.S."/>
            <person name="Eichler E.E."/>
            <person name="Adams M.D."/>
            <person name="Hunkapiller M.W."/>
            <person name="Myers E.W."/>
            <person name="Venter J.C."/>
        </authorList>
    </citation>
    <scope>NUCLEOTIDE SEQUENCE [LARGE SCALE GENOMIC DNA]</scope>
</reference>
<reference key="5">
    <citation type="journal article" date="2005" name="Nucleic Acids Res.">
        <title>GDNF-inducible zinc finger protein 1 is a sequence-specific transcriptional repressor that binds to the HOXA10 gene regulatory region.</title>
        <authorList>
            <person name="Morinaga T."/>
            <person name="Enomoto A."/>
            <person name="Shimono Y."/>
            <person name="Hirose F."/>
            <person name="Fukuda N."/>
            <person name="Dambara A."/>
            <person name="Jijiwa M."/>
            <person name="Kawai K."/>
            <person name="Hashimoto K."/>
            <person name="Ichihara M."/>
            <person name="Asai N."/>
            <person name="Murakumo Y."/>
            <person name="Matsuo S."/>
            <person name="Takahashi M."/>
        </authorList>
    </citation>
    <scope>FUNCTION</scope>
</reference>
<reference key="6">
    <citation type="journal article" date="2007" name="Exp. Cell Res.">
        <title>Nucleolin modulates the subcellular localization of GDNF-inducible zinc finger protein 1 and its roles in transcription and cell proliferation.</title>
        <authorList>
            <person name="Dambara A."/>
            <person name="Morinaga T."/>
            <person name="Fukuda N."/>
            <person name="Yamakawa Y."/>
            <person name="Kato T."/>
            <person name="Enomoto A."/>
            <person name="Asai N."/>
            <person name="Murakumo Y."/>
            <person name="Matsuo S."/>
            <person name="Takahashi M."/>
        </authorList>
    </citation>
    <scope>INTERACTION WITH NCL</scope>
    <scope>SUBCELLULAR LOCATION</scope>
</reference>
<reference key="7">
    <citation type="journal article" date="2011" name="Nature">
        <title>Exome sequencing identifies frequent mutation of the SWI/SNF complex gene PBRM1 in renal carcinoma.</title>
        <authorList>
            <person name="Varela I."/>
            <person name="Tarpey P."/>
            <person name="Raine K."/>
            <person name="Huang D."/>
            <person name="Ong C.K."/>
            <person name="Stephens P."/>
            <person name="Davies H."/>
            <person name="Jones D."/>
            <person name="Lin M.L."/>
            <person name="Teague J."/>
            <person name="Bignell G."/>
            <person name="Butler A."/>
            <person name="Cho J."/>
            <person name="Dalgliesh G.L."/>
            <person name="Galappaththige D."/>
            <person name="Greenman C."/>
            <person name="Hardy C."/>
            <person name="Jia M."/>
            <person name="Latimer C."/>
            <person name="Lau K.W."/>
            <person name="Marshall J."/>
            <person name="McLaren S."/>
            <person name="Menzies A."/>
            <person name="Mudie L."/>
            <person name="Stebbings L."/>
            <person name="Largaespada D.A."/>
            <person name="Wessels L.F.A."/>
            <person name="Richard S."/>
            <person name="Kahnoski R.J."/>
            <person name="Anema J."/>
            <person name="Tuveson D.A."/>
            <person name="Perez-Mancera P.A."/>
            <person name="Mustonen V."/>
            <person name="Fischer A."/>
            <person name="Adams D.J."/>
            <person name="Rust A."/>
            <person name="Chan-On W."/>
            <person name="Subimerb C."/>
            <person name="Dykema K."/>
            <person name="Furge K."/>
            <person name="Campbell P.J."/>
            <person name="Teh B.T."/>
            <person name="Stratton M.R."/>
            <person name="Futreal P.A."/>
        </authorList>
    </citation>
    <scope>VARIANT VAL-97</scope>
</reference>
<reference key="8">
    <citation type="journal article" date="2017" name="Am. J. Hum. Genet.">
        <title>GZF1 Mutations Expand the Genetic Heterogeneity of Larsen Syndrome.</title>
        <authorList>
            <person name="Patel N."/>
            <person name="Shamseldin H.E."/>
            <person name="Sakati N."/>
            <person name="Khan A.O."/>
            <person name="Softa A."/>
            <person name="Al-Fadhli F.M."/>
            <person name="Hashem M."/>
            <person name="Abdulwahab F.M."/>
            <person name="Alshidi T."/>
            <person name="Alomar R."/>
            <person name="Alobeid E."/>
            <person name="Wakil S.M."/>
            <person name="Colak D."/>
            <person name="Alkuraya F.S."/>
        </authorList>
    </citation>
    <scope>INVOLVEMENT IN JLSM</scope>
    <scope>VARIANT JLSM 289-GLU--GLU-711 DEL</scope>
</reference>
<dbReference type="EMBL" id="AB100265">
    <property type="protein sequence ID" value="BAC98464.1"/>
    <property type="molecule type" value="mRNA"/>
</dbReference>
<dbReference type="EMBL" id="AK025447">
    <property type="protein sequence ID" value="BAB15134.1"/>
    <property type="status" value="ALT_INIT"/>
    <property type="molecule type" value="mRNA"/>
</dbReference>
<dbReference type="EMBL" id="AK056159">
    <property type="protein sequence ID" value="BAB71107.1"/>
    <property type="status" value="ALT_INIT"/>
    <property type="molecule type" value="mRNA"/>
</dbReference>
<dbReference type="EMBL" id="AK056477">
    <property type="protein sequence ID" value="BAG51726.1"/>
    <property type="molecule type" value="mRNA"/>
</dbReference>
<dbReference type="EMBL" id="AK289814">
    <property type="protein sequence ID" value="BAF82503.1"/>
    <property type="molecule type" value="mRNA"/>
</dbReference>
<dbReference type="EMBL" id="AK293942">
    <property type="protein sequence ID" value="BAG57319.1"/>
    <property type="molecule type" value="mRNA"/>
</dbReference>
<dbReference type="EMBL" id="AK314599">
    <property type="protein sequence ID" value="BAG37170.1"/>
    <property type="molecule type" value="mRNA"/>
</dbReference>
<dbReference type="EMBL" id="AL096677">
    <property type="status" value="NOT_ANNOTATED_CDS"/>
    <property type="molecule type" value="Genomic_DNA"/>
</dbReference>
<dbReference type="EMBL" id="CH471133">
    <property type="protein sequence ID" value="EAX10159.1"/>
    <property type="molecule type" value="Genomic_DNA"/>
</dbReference>
<dbReference type="EMBL" id="CH471133">
    <property type="protein sequence ID" value="EAX10160.1"/>
    <property type="molecule type" value="Genomic_DNA"/>
</dbReference>
<dbReference type="CCDS" id="CCDS13151.1">
    <molecule id="Q9H116-1"/>
</dbReference>
<dbReference type="RefSeq" id="NP_001303941.1">
    <molecule id="Q9H116-1"/>
    <property type="nucleotide sequence ID" value="NM_001317012.2"/>
</dbReference>
<dbReference type="RefSeq" id="NP_001303948.1">
    <property type="nucleotide sequence ID" value="NM_001317019.1"/>
</dbReference>
<dbReference type="RefSeq" id="NP_071927.1">
    <molecule id="Q9H116-1"/>
    <property type="nucleotide sequence ID" value="NM_022482.5"/>
</dbReference>
<dbReference type="RefSeq" id="XP_011527623.1">
    <molecule id="Q9H116-1"/>
    <property type="nucleotide sequence ID" value="XM_011529321.4"/>
</dbReference>
<dbReference type="RefSeq" id="XP_011527624.1">
    <molecule id="Q9H116-1"/>
    <property type="nucleotide sequence ID" value="XM_011529322.3"/>
</dbReference>
<dbReference type="RefSeq" id="XP_024307736.1">
    <molecule id="Q9H116-1"/>
    <property type="nucleotide sequence ID" value="XM_024451968.2"/>
</dbReference>
<dbReference type="RefSeq" id="XP_024307737.1">
    <molecule id="Q9H116-1"/>
    <property type="nucleotide sequence ID" value="XM_024451969.2"/>
</dbReference>
<dbReference type="SMR" id="Q9H116"/>
<dbReference type="BioGRID" id="122164">
    <property type="interactions" value="79"/>
</dbReference>
<dbReference type="FunCoup" id="Q9H116">
    <property type="interactions" value="1420"/>
</dbReference>
<dbReference type="IntAct" id="Q9H116">
    <property type="interactions" value="57"/>
</dbReference>
<dbReference type="STRING" id="9606.ENSP00000338290"/>
<dbReference type="GlyGen" id="Q9H116">
    <property type="glycosylation" value="1 site, 1 O-linked glycan (1 site)"/>
</dbReference>
<dbReference type="iPTMnet" id="Q9H116"/>
<dbReference type="PhosphoSitePlus" id="Q9H116"/>
<dbReference type="BioMuta" id="GZF1"/>
<dbReference type="DMDM" id="23397004"/>
<dbReference type="jPOST" id="Q9H116"/>
<dbReference type="MassIVE" id="Q9H116"/>
<dbReference type="PaxDb" id="9606-ENSP00000338290"/>
<dbReference type="PeptideAtlas" id="Q9H116"/>
<dbReference type="ProteomicsDB" id="4010"/>
<dbReference type="ProteomicsDB" id="80353">
    <molecule id="Q9H116-1"/>
</dbReference>
<dbReference type="Pumba" id="Q9H116"/>
<dbReference type="Antibodypedia" id="9733">
    <property type="antibodies" value="52 antibodies from 19 providers"/>
</dbReference>
<dbReference type="DNASU" id="64412"/>
<dbReference type="Ensembl" id="ENST00000338121.10">
    <molecule id="Q9H116-1"/>
    <property type="protein sequence ID" value="ENSP00000338290.5"/>
    <property type="gene ID" value="ENSG00000125812.16"/>
</dbReference>
<dbReference type="Ensembl" id="ENST00000377051.2">
    <molecule id="Q9H116-1"/>
    <property type="protein sequence ID" value="ENSP00000366250.2"/>
    <property type="gene ID" value="ENSG00000125812.16"/>
</dbReference>
<dbReference type="GeneID" id="64412"/>
<dbReference type="KEGG" id="hsa:64412"/>
<dbReference type="MANE-Select" id="ENST00000338121.10">
    <property type="protein sequence ID" value="ENSP00000338290.5"/>
    <property type="RefSeq nucleotide sequence ID" value="NM_022482.5"/>
    <property type="RefSeq protein sequence ID" value="NP_071927.1"/>
</dbReference>
<dbReference type="UCSC" id="uc002wsy.4">
    <molecule id="Q9H116-1"/>
    <property type="organism name" value="human"/>
</dbReference>
<dbReference type="AGR" id="HGNC:15808"/>
<dbReference type="CTD" id="64412"/>
<dbReference type="DisGeNET" id="64412"/>
<dbReference type="GeneCards" id="GZF1"/>
<dbReference type="HGNC" id="HGNC:15808">
    <property type="gene designation" value="GZF1"/>
</dbReference>
<dbReference type="HPA" id="ENSG00000125812">
    <property type="expression patterns" value="Tissue enhanced (bone)"/>
</dbReference>
<dbReference type="MalaCards" id="GZF1"/>
<dbReference type="MIM" id="613842">
    <property type="type" value="gene"/>
</dbReference>
<dbReference type="MIM" id="617662">
    <property type="type" value="phenotype"/>
</dbReference>
<dbReference type="neXtProt" id="NX_Q9H116"/>
<dbReference type="OpenTargets" id="ENSG00000125812"/>
<dbReference type="Orphanet" id="527450">
    <property type="disease" value="Severe myopia-generalized joint laxity-short stature syndrome"/>
</dbReference>
<dbReference type="PharmGKB" id="PA162390561"/>
<dbReference type="VEuPathDB" id="HostDB:ENSG00000125812"/>
<dbReference type="eggNOG" id="KOG1721">
    <property type="taxonomic scope" value="Eukaryota"/>
</dbReference>
<dbReference type="GeneTree" id="ENSGT00870000136554"/>
<dbReference type="HOGENOM" id="CLU_018348_1_0_1"/>
<dbReference type="InParanoid" id="Q9H116"/>
<dbReference type="OMA" id="PFMCESC"/>
<dbReference type="OrthoDB" id="1095242at2759"/>
<dbReference type="PAN-GO" id="Q9H116">
    <property type="GO annotations" value="3 GO annotations based on evolutionary models"/>
</dbReference>
<dbReference type="PhylomeDB" id="Q9H116"/>
<dbReference type="TreeFam" id="TF350965"/>
<dbReference type="PathwayCommons" id="Q9H116"/>
<dbReference type="SignaLink" id="Q9H116"/>
<dbReference type="BioGRID-ORCS" id="64412">
    <property type="hits" value="24 hits in 1238 CRISPR screens"/>
</dbReference>
<dbReference type="CD-CODE" id="91857CE7">
    <property type="entry name" value="Nucleolus"/>
</dbReference>
<dbReference type="ChiTaRS" id="GZF1">
    <property type="organism name" value="human"/>
</dbReference>
<dbReference type="GenomeRNAi" id="64412"/>
<dbReference type="Pharos" id="Q9H116">
    <property type="development level" value="Tbio"/>
</dbReference>
<dbReference type="PRO" id="PR:Q9H116"/>
<dbReference type="Proteomes" id="UP000005640">
    <property type="component" value="Chromosome 20"/>
</dbReference>
<dbReference type="RNAct" id="Q9H116">
    <property type="molecule type" value="protein"/>
</dbReference>
<dbReference type="Bgee" id="ENSG00000125812">
    <property type="expression patterns" value="Expressed in sperm and 179 other cell types or tissues"/>
</dbReference>
<dbReference type="ExpressionAtlas" id="Q9H116">
    <property type="expression patterns" value="baseline and differential"/>
</dbReference>
<dbReference type="GO" id="GO:0005737">
    <property type="term" value="C:cytoplasm"/>
    <property type="evidence" value="ECO:0007669"/>
    <property type="project" value="UniProtKB-SubCell"/>
</dbReference>
<dbReference type="GO" id="GO:0005730">
    <property type="term" value="C:nucleolus"/>
    <property type="evidence" value="ECO:0000314"/>
    <property type="project" value="HPA"/>
</dbReference>
<dbReference type="GO" id="GO:0005654">
    <property type="term" value="C:nucleoplasm"/>
    <property type="evidence" value="ECO:0000314"/>
    <property type="project" value="HPA"/>
</dbReference>
<dbReference type="GO" id="GO:0000981">
    <property type="term" value="F:DNA-binding transcription factor activity, RNA polymerase II-specific"/>
    <property type="evidence" value="ECO:0000318"/>
    <property type="project" value="GO_Central"/>
</dbReference>
<dbReference type="GO" id="GO:0001227">
    <property type="term" value="F:DNA-binding transcription repressor activity, RNA polymerase II-specific"/>
    <property type="evidence" value="ECO:0000314"/>
    <property type="project" value="NTNU_SB"/>
</dbReference>
<dbReference type="GO" id="GO:0000978">
    <property type="term" value="F:RNA polymerase II cis-regulatory region sequence-specific DNA binding"/>
    <property type="evidence" value="ECO:0000314"/>
    <property type="project" value="NTNU_SB"/>
</dbReference>
<dbReference type="GO" id="GO:0043565">
    <property type="term" value="F:sequence-specific DNA binding"/>
    <property type="evidence" value="ECO:0000314"/>
    <property type="project" value="UniProtKB"/>
</dbReference>
<dbReference type="GO" id="GO:0008270">
    <property type="term" value="F:zinc ion binding"/>
    <property type="evidence" value="ECO:0007669"/>
    <property type="project" value="UniProtKB-KW"/>
</dbReference>
<dbReference type="GO" id="GO:0001658">
    <property type="term" value="P:branching involved in ureteric bud morphogenesis"/>
    <property type="evidence" value="ECO:0007669"/>
    <property type="project" value="Ensembl"/>
</dbReference>
<dbReference type="GO" id="GO:0045892">
    <property type="term" value="P:negative regulation of DNA-templated transcription"/>
    <property type="evidence" value="ECO:0000314"/>
    <property type="project" value="UniProtKB"/>
</dbReference>
<dbReference type="GO" id="GO:0000122">
    <property type="term" value="P:negative regulation of transcription by RNA polymerase II"/>
    <property type="evidence" value="ECO:0000314"/>
    <property type="project" value="NTNU_SB"/>
</dbReference>
<dbReference type="GO" id="GO:0006355">
    <property type="term" value="P:regulation of DNA-templated transcription"/>
    <property type="evidence" value="ECO:0000318"/>
    <property type="project" value="GO_Central"/>
</dbReference>
<dbReference type="CDD" id="cd18211">
    <property type="entry name" value="BTB_POZ_ZBTB23_GZF1"/>
    <property type="match status" value="1"/>
</dbReference>
<dbReference type="FunFam" id="3.30.160.60:FF:000657">
    <property type="entry name" value="GDNF inducible zinc finger protein 1"/>
    <property type="match status" value="1"/>
</dbReference>
<dbReference type="FunFam" id="3.30.160.60:FF:001170">
    <property type="entry name" value="GDNF inducible zinc finger protein 1"/>
    <property type="match status" value="1"/>
</dbReference>
<dbReference type="FunFam" id="3.30.160.60:FF:001563">
    <property type="entry name" value="GDNF inducible zinc finger protein 1"/>
    <property type="match status" value="1"/>
</dbReference>
<dbReference type="FunFam" id="3.30.160.60:FF:001633">
    <property type="entry name" value="GDNF inducible zinc finger protein 1"/>
    <property type="match status" value="1"/>
</dbReference>
<dbReference type="FunFam" id="3.30.710.10:FF:000090">
    <property type="entry name" value="GDNF inducible zinc finger protein 1"/>
    <property type="match status" value="1"/>
</dbReference>
<dbReference type="FunFam" id="3.30.160.60:FF:000322">
    <property type="entry name" value="GDNF-inducible zinc finger protein 1"/>
    <property type="match status" value="1"/>
</dbReference>
<dbReference type="FunFam" id="3.30.160.60:FF:000709">
    <property type="entry name" value="GDNF-inducible zinc finger protein 1"/>
    <property type="match status" value="1"/>
</dbReference>
<dbReference type="FunFam" id="3.30.160.60:FF:000701">
    <property type="entry name" value="Zinc finger and BTB domain containing 40"/>
    <property type="match status" value="1"/>
</dbReference>
<dbReference type="FunFam" id="3.30.160.60:FF:002343">
    <property type="entry name" value="Zinc finger protein 33A"/>
    <property type="match status" value="1"/>
</dbReference>
<dbReference type="FunFam" id="3.30.160.60:FF:000912">
    <property type="entry name" value="Zinc finger protein 660"/>
    <property type="match status" value="1"/>
</dbReference>
<dbReference type="Gene3D" id="3.30.160.60">
    <property type="entry name" value="Classic Zinc Finger"/>
    <property type="match status" value="9"/>
</dbReference>
<dbReference type="Gene3D" id="3.30.710.10">
    <property type="entry name" value="Potassium Channel Kv1.1, Chain A"/>
    <property type="match status" value="1"/>
</dbReference>
<dbReference type="InterPro" id="IPR000210">
    <property type="entry name" value="BTB/POZ_dom"/>
</dbReference>
<dbReference type="InterPro" id="IPR011333">
    <property type="entry name" value="SKP1/BTB/POZ_sf"/>
</dbReference>
<dbReference type="InterPro" id="IPR036236">
    <property type="entry name" value="Znf_C2H2_sf"/>
</dbReference>
<dbReference type="InterPro" id="IPR013087">
    <property type="entry name" value="Znf_C2H2_type"/>
</dbReference>
<dbReference type="PANTHER" id="PTHR24399:SF23">
    <property type="entry name" value="C2H2-TYPE DOMAIN-CONTAINING PROTEIN"/>
    <property type="match status" value="1"/>
</dbReference>
<dbReference type="PANTHER" id="PTHR24399">
    <property type="entry name" value="ZINC FINGER AND BTB DOMAIN-CONTAINING"/>
    <property type="match status" value="1"/>
</dbReference>
<dbReference type="Pfam" id="PF00651">
    <property type="entry name" value="BTB"/>
    <property type="match status" value="1"/>
</dbReference>
<dbReference type="Pfam" id="PF00096">
    <property type="entry name" value="zf-C2H2"/>
    <property type="match status" value="8"/>
</dbReference>
<dbReference type="Pfam" id="PF13912">
    <property type="entry name" value="zf-C2H2_6"/>
    <property type="match status" value="1"/>
</dbReference>
<dbReference type="SMART" id="SM00225">
    <property type="entry name" value="BTB"/>
    <property type="match status" value="1"/>
</dbReference>
<dbReference type="SMART" id="SM00355">
    <property type="entry name" value="ZnF_C2H2"/>
    <property type="match status" value="10"/>
</dbReference>
<dbReference type="SUPFAM" id="SSF57667">
    <property type="entry name" value="beta-beta-alpha zinc fingers"/>
    <property type="match status" value="5"/>
</dbReference>
<dbReference type="SUPFAM" id="SSF54695">
    <property type="entry name" value="POZ domain"/>
    <property type="match status" value="1"/>
</dbReference>
<dbReference type="PROSITE" id="PS50097">
    <property type="entry name" value="BTB"/>
    <property type="match status" value="1"/>
</dbReference>
<dbReference type="PROSITE" id="PS00028">
    <property type="entry name" value="ZINC_FINGER_C2H2_1"/>
    <property type="match status" value="10"/>
</dbReference>
<dbReference type="PROSITE" id="PS50157">
    <property type="entry name" value="ZINC_FINGER_C2H2_2"/>
    <property type="match status" value="10"/>
</dbReference>
<evidence type="ECO:0000250" key="1">
    <source>
        <dbReference type="UniProtKB" id="Q4VBD9"/>
    </source>
</evidence>
<evidence type="ECO:0000255" key="2">
    <source>
        <dbReference type="PROSITE-ProRule" id="PRU00037"/>
    </source>
</evidence>
<evidence type="ECO:0000255" key="3">
    <source>
        <dbReference type="PROSITE-ProRule" id="PRU00042"/>
    </source>
</evidence>
<evidence type="ECO:0000256" key="4">
    <source>
        <dbReference type="SAM" id="MobiDB-lite"/>
    </source>
</evidence>
<evidence type="ECO:0000269" key="5">
    <source>
    </source>
</evidence>
<evidence type="ECO:0000269" key="6">
    <source>
    </source>
</evidence>
<evidence type="ECO:0000269" key="7">
    <source>
    </source>
</evidence>
<evidence type="ECO:0000269" key="8">
    <source>
    </source>
</evidence>
<evidence type="ECO:0000269" key="9">
    <source>
    </source>
</evidence>
<evidence type="ECO:0000269" key="10">
    <source>
    </source>
</evidence>
<evidence type="ECO:0000303" key="11">
    <source>
    </source>
</evidence>
<evidence type="ECO:0000305" key="12"/>
<evidence type="ECO:0000312" key="13">
    <source>
        <dbReference type="HGNC" id="HGNC:15808"/>
    </source>
</evidence>
<comment type="function">
    <text evidence="5 7">Transcriptional repressor that binds the GZF1 responsive element (GRE) (consensus: 5'-TGCGCN[TG][CA]TATA-3'). May be regulating VSX2/HOX10 expression.</text>
</comment>
<comment type="subunit">
    <text evidence="8">Interacts with NCL.</text>
</comment>
<comment type="subcellular location">
    <subcellularLocation>
        <location evidence="5">Cytoplasm</location>
    </subcellularLocation>
    <subcellularLocation>
        <location evidence="5 8">Nucleus</location>
        <location evidence="5 8">Nucleoplasm</location>
    </subcellularLocation>
    <subcellularLocation>
        <location evidence="8">Nucleus</location>
        <location evidence="8">Nucleolus</location>
    </subcellularLocation>
    <text evidence="8">Nuclear localization depends upon NCL.</text>
</comment>
<comment type="alternative products">
    <event type="alternative splicing"/>
    <isoform>
        <id>Q9H116-1</id>
        <name>1</name>
        <sequence type="displayed"/>
    </isoform>
    <isoform>
        <id>Q9H116-4</id>
        <name>2</name>
        <sequence type="described" ref="VSP_055933"/>
    </isoform>
</comment>
<comment type="tissue specificity">
    <text evidence="5">Expressed in adult brain, heart, skeletal muscle, kidney and liver. Also detected in fetal brain and kidney, and at lower levels in fetal lung and liver.</text>
</comment>
<comment type="induction">
    <text evidence="5">By GDNF.</text>
</comment>
<comment type="disease" evidence="10">
    <disease id="DI-05096">
        <name>Joint laxity, short stature, and myopia</name>
        <acronym>JLSM</acronym>
        <description>An autosomal recessive disease characterized by generalized joint laxity, joint dislocation, pectus carinatum, short stature, and severe myopia with retinal detachment.</description>
        <dbReference type="MIM" id="617662"/>
    </disease>
    <text>The disease is caused by variants affecting the gene represented in this entry.</text>
</comment>
<comment type="similarity">
    <text evidence="12">Belongs to the krueppel C2H2-type zinc-finger protein family.</text>
</comment>
<comment type="sequence caution" evidence="12">
    <conflict type="erroneous initiation">
        <sequence resource="EMBL-CDS" id="BAB15134"/>
    </conflict>
    <text>Truncated N-terminus.</text>
</comment>
<comment type="sequence caution" evidence="12">
    <conflict type="erroneous initiation">
        <sequence resource="EMBL-CDS" id="BAB71107"/>
    </conflict>
    <text>Truncated N-terminus.</text>
</comment>
<proteinExistence type="evidence at protein level"/>
<protein>
    <recommendedName>
        <fullName>GDNF-inducible zinc finger protein 1</fullName>
    </recommendedName>
    <alternativeName>
        <fullName>Zinc finger and BTB domain-containing protein 23</fullName>
    </alternativeName>
    <alternativeName>
        <fullName>Zinc finger protein 336</fullName>
    </alternativeName>
</protein>
<name>GZF1_HUMAN</name>
<sequence length="711" mass="80492">MESGAVLLESKSSPFNLLHEMHELRLLGHLCDVTVSVEYQGVRKDFMAHKAVLAATSKFFKEVFLNEKSVDGTRTNVYLNEVQVADFASFLEFVYTAKVQVEEDRVQRMLEVAEKLKCLDLSETCFQLKKQMLESVLLELQNFSESQEVEVSSGSQVSAAPAPRASVATDGPHPSGLTDSLDYPGERASNGMSSDLPPKKSKDKLDKKKEVVKPPYPKIRRASGRLAGRKVFVEIPKKKYTRRLREQQKTAEGDVGDYRCPQDQSPDRVGTEMEQVSKNEGCQAGAELEELSKKAGPEEEEEEEEEDEEGEKKKSNFKCSICEKAFLYEKSFLKHSKHRHGVATEVVYRCDTCGQTFANRCNLKSHQRHVHSSERHFPCELCGKKFKRKKDVKRHVLQVHEGGGERHRCGQCGKGLSSKTALRLHERTHTGDRPYGCTECGARFSQPSALKTHMRIHTGEKPFVCDECGARFTQNHMLIYHKRCHTGERPFMCETCGKSFASKEYLKHHNRIHTGSKPFKCEVCFRTFAQRNSLYQHIKVHTGERPYCCDQCGKQFTQLNALQRHRRIHTGERPFMCNACGRTFTDKSTLRRHTSIHDKNTPWKSFLVIVDGSPKNDDGHKTEQPDEEYVSSKLSDKLLSFAENGHFHNLAAVQDTVPTMQENSSADTACKADDSVVSQDTLLATTISELSELTPQTDSMPTQLHSLSNME</sequence>
<keyword id="KW-0025">Alternative splicing</keyword>
<keyword id="KW-0963">Cytoplasm</keyword>
<keyword id="KW-0225">Disease variant</keyword>
<keyword id="KW-0238">DNA-binding</keyword>
<keyword id="KW-0242">Dwarfism</keyword>
<keyword id="KW-0479">Metal-binding</keyword>
<keyword id="KW-0539">Nucleus</keyword>
<keyword id="KW-0597">Phosphoprotein</keyword>
<keyword id="KW-1267">Proteomics identification</keyword>
<keyword id="KW-1185">Reference proteome</keyword>
<keyword id="KW-0677">Repeat</keyword>
<keyword id="KW-0678">Repressor</keyword>
<keyword id="KW-0804">Transcription</keyword>
<keyword id="KW-0805">Transcription regulation</keyword>
<keyword id="KW-0862">Zinc</keyword>
<keyword id="KW-0863">Zinc-finger</keyword>